<organism>
    <name type="scientific">Caenorhabditis briggsae</name>
    <dbReference type="NCBI Taxonomy" id="6238"/>
    <lineage>
        <taxon>Eukaryota</taxon>
        <taxon>Metazoa</taxon>
        <taxon>Ecdysozoa</taxon>
        <taxon>Nematoda</taxon>
        <taxon>Chromadorea</taxon>
        <taxon>Rhabditida</taxon>
        <taxon>Rhabditina</taxon>
        <taxon>Rhabditomorpha</taxon>
        <taxon>Rhabditoidea</taxon>
        <taxon>Rhabditidae</taxon>
        <taxon>Peloderinae</taxon>
        <taxon>Caenorhabditis</taxon>
    </lineage>
</organism>
<protein>
    <recommendedName>
        <fullName evidence="1">Molybdopterin synthase sulfur carrier subunit</fullName>
    </recommendedName>
    <alternativeName>
        <fullName evidence="1">Molybdenum cofactor synthesis protein 2 small subunit</fullName>
    </alternativeName>
    <alternativeName>
        <fullName evidence="1">Molybdenum cofactor synthesis protein 2A</fullName>
        <shortName evidence="1">MOCS2A</shortName>
    </alternativeName>
    <alternativeName>
        <fullName evidence="1">Sulfur carrier protein MOCS2A</fullName>
    </alternativeName>
</protein>
<gene>
    <name type="ORF">CBG26118</name>
</gene>
<sequence>MVSVKVLFFGEAFQLVGKREETVEFPAETDYEELRRIILEKYPALSKIEKVMMLAVDQEYANPGDRFELERFTEIAVIPPLSGG</sequence>
<name>MOC2A_CAEBR</name>
<dbReference type="EMBL" id="HE601339">
    <property type="protein sequence ID" value="CAR98645.1"/>
    <property type="molecule type" value="Genomic_DNA"/>
</dbReference>
<dbReference type="RefSeq" id="XP_045098216.1">
    <property type="nucleotide sequence ID" value="XM_045244386.1"/>
</dbReference>
<dbReference type="SMR" id="B6IFG5"/>
<dbReference type="FunCoup" id="B6IFG5">
    <property type="interactions" value="80"/>
</dbReference>
<dbReference type="STRING" id="6238.B6IFG5"/>
<dbReference type="EnsemblMetazoa" id="CBG26118.1">
    <property type="protein sequence ID" value="CBG26118.1"/>
    <property type="gene ID" value="WBGene00087532"/>
</dbReference>
<dbReference type="GeneID" id="68917599"/>
<dbReference type="WormBase" id="CBG26118">
    <property type="protein sequence ID" value="CBP29937"/>
    <property type="gene ID" value="WBGene00087532"/>
</dbReference>
<dbReference type="eggNOG" id="KOG3474">
    <property type="taxonomic scope" value="Eukaryota"/>
</dbReference>
<dbReference type="HOGENOM" id="CLU_114601_4_3_1"/>
<dbReference type="InParanoid" id="B6IFG5"/>
<dbReference type="OMA" id="DQEYANP"/>
<dbReference type="OrthoDB" id="5531344at2759"/>
<dbReference type="UniPathway" id="UPA00344"/>
<dbReference type="Proteomes" id="UP000008549">
    <property type="component" value="Unassembled WGS sequence"/>
</dbReference>
<dbReference type="GO" id="GO:0005829">
    <property type="term" value="C:cytosol"/>
    <property type="evidence" value="ECO:0000250"/>
    <property type="project" value="UniProtKB"/>
</dbReference>
<dbReference type="GO" id="GO:1990133">
    <property type="term" value="C:molybdopterin adenylyltransferase complex"/>
    <property type="evidence" value="ECO:0000318"/>
    <property type="project" value="GO_Central"/>
</dbReference>
<dbReference type="GO" id="GO:1990140">
    <property type="term" value="C:molybdopterin synthase complex"/>
    <property type="evidence" value="ECO:0000250"/>
    <property type="project" value="UniProtKB"/>
</dbReference>
<dbReference type="GO" id="GO:0030366">
    <property type="term" value="F:molybdopterin synthase activity"/>
    <property type="evidence" value="ECO:0007669"/>
    <property type="project" value="UniProtKB-UniRule"/>
</dbReference>
<dbReference type="GO" id="GO:0000166">
    <property type="term" value="F:nucleotide binding"/>
    <property type="evidence" value="ECO:0007669"/>
    <property type="project" value="UniProtKB-KW"/>
</dbReference>
<dbReference type="GO" id="GO:0006777">
    <property type="term" value="P:Mo-molybdopterin cofactor biosynthetic process"/>
    <property type="evidence" value="ECO:0000250"/>
    <property type="project" value="UniProtKB"/>
</dbReference>
<dbReference type="CDD" id="cd00754">
    <property type="entry name" value="Ubl_MoaD"/>
    <property type="match status" value="1"/>
</dbReference>
<dbReference type="FunFam" id="3.10.20.30:FF:000010">
    <property type="entry name" value="Molybdopterin synthase sulfur carrier subunit"/>
    <property type="match status" value="1"/>
</dbReference>
<dbReference type="Gene3D" id="3.10.20.30">
    <property type="match status" value="1"/>
</dbReference>
<dbReference type="HAMAP" id="MF_03051">
    <property type="entry name" value="MOCS2A"/>
    <property type="match status" value="1"/>
</dbReference>
<dbReference type="InterPro" id="IPR012675">
    <property type="entry name" value="Beta-grasp_dom_sf"/>
</dbReference>
<dbReference type="InterPro" id="IPR044672">
    <property type="entry name" value="MOCS2A"/>
</dbReference>
<dbReference type="InterPro" id="IPR028887">
    <property type="entry name" value="MOCS2A_euk"/>
</dbReference>
<dbReference type="InterPro" id="IPR016155">
    <property type="entry name" value="Mopterin_synth/thiamin_S_b"/>
</dbReference>
<dbReference type="InterPro" id="IPR003749">
    <property type="entry name" value="ThiS/MoaD-like"/>
</dbReference>
<dbReference type="PANTHER" id="PTHR33359">
    <property type="entry name" value="MOLYBDOPTERIN SYNTHASE SULFUR CARRIER SUBUNIT"/>
    <property type="match status" value="1"/>
</dbReference>
<dbReference type="PANTHER" id="PTHR33359:SF1">
    <property type="entry name" value="MOLYBDOPTERIN SYNTHASE SULFUR CARRIER SUBUNIT"/>
    <property type="match status" value="1"/>
</dbReference>
<dbReference type="Pfam" id="PF02597">
    <property type="entry name" value="ThiS"/>
    <property type="match status" value="1"/>
</dbReference>
<dbReference type="SUPFAM" id="SSF54285">
    <property type="entry name" value="MoaD/ThiS"/>
    <property type="match status" value="1"/>
</dbReference>
<feature type="chain" id="PRO_0000369307" description="Molybdopterin synthase sulfur carrier subunit">
    <location>
        <begin position="1"/>
        <end position="84"/>
    </location>
</feature>
<feature type="modified residue" description="1-thioglycine; alternate" evidence="1">
    <location>
        <position position="84"/>
    </location>
</feature>
<feature type="modified residue" description="Glycyl adenylate; alternate" evidence="1">
    <location>
        <position position="84"/>
    </location>
</feature>
<proteinExistence type="inferred from homology"/>
<keyword id="KW-0963">Cytoplasm</keyword>
<keyword id="KW-0501">Molybdenum cofactor biosynthesis</keyword>
<keyword id="KW-0547">Nucleotide-binding</keyword>
<keyword id="KW-0597">Phosphoprotein</keyword>
<keyword id="KW-1185">Reference proteome</keyword>
<comment type="function">
    <text evidence="1">Acts as a sulfur carrier required for molybdopterin biosynthesis. Component of the molybdopterin synthase complex that catalyzes the conversion of precursor Z into molybdopterin by mediating the incorporation of 2 sulfur atoms into precursor Z to generate a dithiolene group. In the complex, serves as sulfur donor by being thiocarboxylated (-COSH) at its C-terminus by MOCS3. After interaction with MOCS2B, the sulfur is then transferred to precursor Z to form molybdopterin.</text>
</comment>
<comment type="pathway">
    <text evidence="1">Cofactor biosynthesis; molybdopterin biosynthesis.</text>
</comment>
<comment type="subunit">
    <text evidence="1">Heterotetramer; composed of 2 small (MOCS2A) and 2 large (MOCS2B) subunits.</text>
</comment>
<comment type="subcellular location">
    <subcellularLocation>
        <location evidence="1">Cytoplasm</location>
    </subcellularLocation>
</comment>
<comment type="PTM">
    <text evidence="1">C-terminal thiocarboxylation occurs in 2 steps, it is first acyl-adenylated (-COAMP) via the hesA/moeB/thiF part of MOCS3, then thiocarboxylated (-COSH) via the rhodanese domain of MOCS3.</text>
</comment>
<comment type="similarity">
    <text evidence="1">Belongs to the MoaD family. MOCS2A subfamily.</text>
</comment>
<accession>B6IFG5</accession>
<reference key="1">
    <citation type="journal article" date="2003" name="PLoS Biol.">
        <title>The genome sequence of Caenorhabditis briggsae: a platform for comparative genomics.</title>
        <authorList>
            <person name="Stein L.D."/>
            <person name="Bao Z."/>
            <person name="Blasiar D."/>
            <person name="Blumenthal T."/>
            <person name="Brent M.R."/>
            <person name="Chen N."/>
            <person name="Chinwalla A."/>
            <person name="Clarke L."/>
            <person name="Clee C."/>
            <person name="Coghlan A."/>
            <person name="Coulson A."/>
            <person name="D'Eustachio P."/>
            <person name="Fitch D.H.A."/>
            <person name="Fulton L.A."/>
            <person name="Fulton R.E."/>
            <person name="Griffiths-Jones S."/>
            <person name="Harris T.W."/>
            <person name="Hillier L.W."/>
            <person name="Kamath R."/>
            <person name="Kuwabara P.E."/>
            <person name="Mardis E.R."/>
            <person name="Marra M.A."/>
            <person name="Miner T.L."/>
            <person name="Minx P."/>
            <person name="Mullikin J.C."/>
            <person name="Plumb R.W."/>
            <person name="Rogers J."/>
            <person name="Schein J.E."/>
            <person name="Sohrmann M."/>
            <person name="Spieth J."/>
            <person name="Stajich J.E."/>
            <person name="Wei C."/>
            <person name="Willey D."/>
            <person name="Wilson R.K."/>
            <person name="Durbin R.M."/>
            <person name="Waterston R.H."/>
        </authorList>
    </citation>
    <scope>NUCLEOTIDE SEQUENCE [LARGE SCALE GENOMIC DNA]</scope>
    <source>
        <strain>AF16</strain>
    </source>
</reference>
<evidence type="ECO:0000255" key="1">
    <source>
        <dbReference type="HAMAP-Rule" id="MF_03051"/>
    </source>
</evidence>